<organism>
    <name type="scientific">Methanococcus voltae</name>
    <dbReference type="NCBI Taxonomy" id="2188"/>
    <lineage>
        <taxon>Archaea</taxon>
        <taxon>Methanobacteriati</taxon>
        <taxon>Methanobacteriota</taxon>
        <taxon>Methanomada group</taxon>
        <taxon>Methanococci</taxon>
        <taxon>Methanococcales</taxon>
        <taxon>Methanococcaceae</taxon>
        <taxon>Methanococcus</taxon>
    </lineage>
</organism>
<protein>
    <recommendedName>
        <fullName>F420-non-reducing hydrogenase vhu subunit U</fullName>
        <ecNumber>1.12.99.-</ecNumber>
    </recommendedName>
</protein>
<dbReference type="EC" id="1.12.99.-"/>
<dbReference type="EMBL" id="X61204">
    <property type="protein sequence ID" value="CAA43511.1"/>
    <property type="molecule type" value="Genomic_DNA"/>
</dbReference>
<dbReference type="PIR" id="S32463">
    <property type="entry name" value="S32463"/>
</dbReference>
<dbReference type="GO" id="GO:0046872">
    <property type="term" value="F:metal ion binding"/>
    <property type="evidence" value="ECO:0007669"/>
    <property type="project" value="UniProtKB-KW"/>
</dbReference>
<dbReference type="GO" id="GO:0016491">
    <property type="term" value="F:oxidoreductase activity"/>
    <property type="evidence" value="ECO:0007669"/>
    <property type="project" value="UniProtKB-KW"/>
</dbReference>
<dbReference type="Gene3D" id="1.10.645.10">
    <property type="entry name" value="Cytochrome-c3 Hydrogenase, chain B"/>
    <property type="match status" value="1"/>
</dbReference>
<dbReference type="InterPro" id="IPR053438">
    <property type="entry name" value="F420-Hydrogenase_large-U"/>
</dbReference>
<dbReference type="InterPro" id="IPR029014">
    <property type="entry name" value="NiFe-Hase_large"/>
</dbReference>
<dbReference type="NCBIfam" id="NF041786">
    <property type="entry name" value="VhuU"/>
    <property type="match status" value="1"/>
</dbReference>
<dbReference type="SUPFAM" id="SSF56762">
    <property type="entry name" value="HydB/Nqo4-like"/>
    <property type="match status" value="1"/>
</dbReference>
<reference key="1">
    <citation type="journal article" date="1992" name="Mol. Gen. Genet.">
        <title>Methanococcus voltae harbors four gene clusters potentially encoding two [NiFe] and two [NiFeSe] hydrogenases, each of the cofactor F420-reducing or F420-non-reducing types.</title>
        <authorList>
            <person name="Halboth S."/>
            <person name="Klein A."/>
        </authorList>
    </citation>
    <scope>NUCLEOTIDE SEQUENCE [GENOMIC DNA]</scope>
    <source>
        <strain>ATCC 33273 / DSM 1537 / NBRC 100457 / OCM 70 / PS</strain>
    </source>
</reference>
<reference key="2">
    <citation type="journal article" date="1993" name="Eur. J. Biochem.">
        <title>A novel very small subunit of a selenium containing [NiFe] hydrogenase of Methanococcus voltae is postranslationally processed by cleavage at a defined position.</title>
        <authorList>
            <person name="Sorgenfrei O."/>
            <person name="Linder D."/>
            <person name="Karas M."/>
            <person name="Klein A."/>
        </authorList>
    </citation>
    <scope>PROTEIN SEQUENCE OF 1-26</scope>
    <scope>PROTEOLYTIC PROCESSING</scope>
</reference>
<proteinExistence type="evidence at protein level"/>
<gene>
    <name type="primary">vhuU</name>
</gene>
<name>VHUU_METVO</name>
<feature type="initiator methionine" description="Removed; partial">
    <location>
        <position position="1"/>
    </location>
</feature>
<feature type="chain" id="PRO_0000013411" description="F420-non-reducing hydrogenase vhu subunit U">
    <location>
        <begin position="2"/>
        <end position="26"/>
    </location>
</feature>
<feature type="propeptide" id="PRO_0000013412" description="Removed in mature form">
    <location>
        <begin position="27"/>
        <end position="44"/>
    </location>
</feature>
<feature type="binding site" evidence="2">
    <location>
        <position position="20"/>
    </location>
    <ligand>
        <name>Ni(2+)</name>
        <dbReference type="ChEBI" id="CHEBI:49786"/>
    </ligand>
</feature>
<feature type="binding site" evidence="2">
    <location>
        <position position="23"/>
    </location>
    <ligand>
        <name>Ni(2+)</name>
        <dbReference type="ChEBI" id="CHEBI:49786"/>
    </ligand>
</feature>
<feature type="non-standard amino acid" description="Selenocysteine" evidence="3">
    <location>
        <position position="20"/>
    </location>
</feature>
<accession>Q00410</accession>
<accession>P95319</accession>
<accession>Q7M534</accession>
<keyword id="KW-0903">Direct protein sequencing</keyword>
<keyword id="KW-0479">Metal-binding</keyword>
<keyword id="KW-0533">Nickel</keyword>
<keyword id="KW-0560">Oxidoreductase</keyword>
<keyword id="KW-0712">Selenocysteine</keyword>
<evidence type="ECO:0000250" key="1"/>
<evidence type="ECO:0000255" key="2"/>
<evidence type="ECO:0000305" key="3"/>
<comment type="cofactor">
    <cofactor evidence="3">
        <name>Ni(2+)</name>
        <dbReference type="ChEBI" id="CHEBI:49786"/>
    </cofactor>
</comment>
<comment type="subunit">
    <text evidence="1">The F420-non-reducing hydrogenase vhu is composed of four subunits; VhuA, VhuD, VhuG and VhuU.</text>
</comment>
<comment type="miscellaneous">
    <text>The large subunit of Vhu is split into VhuA and VhuU. Each contributes two ligands to the [NiFeSe] center.</text>
</comment>
<comment type="miscellaneous">
    <text>The peptide is so short that about 65% of the chains are released from the ribosome before the initiator Met can be removed.</text>
</comment>
<comment type="similarity">
    <text evidence="3">Belongs to the [NiFe]/[NiFeSe] hydrogenase large subunit family.</text>
</comment>
<sequence>MVDETKLNLIEIVLRAYDPUYSCAAHMIVEDAEGNVVFEIVNDE</sequence>